<dbReference type="EC" id="4.1.-.-"/>
<dbReference type="EMBL" id="AF170880">
    <property type="protein sequence ID" value="AAF67511.1"/>
    <property type="molecule type" value="Genomic_DNA"/>
</dbReference>
<dbReference type="RefSeq" id="WP_023543301.1">
    <property type="nucleotide sequence ID" value="NZ_CP108849.1"/>
</dbReference>
<dbReference type="SMR" id="Q9L9F0"/>
<dbReference type="GeneID" id="91340141"/>
<dbReference type="KEGG" id="ag:AAF67511"/>
<dbReference type="BioCyc" id="MetaCyc:MONOMER-18093"/>
<dbReference type="UniPathway" id="UPA01035"/>
<dbReference type="GO" id="GO:0005856">
    <property type="term" value="C:cytoskeleton"/>
    <property type="evidence" value="ECO:0007669"/>
    <property type="project" value="TreeGrafter"/>
</dbReference>
<dbReference type="GO" id="GO:0051015">
    <property type="term" value="F:actin filament binding"/>
    <property type="evidence" value="ECO:0007669"/>
    <property type="project" value="TreeGrafter"/>
</dbReference>
<dbReference type="GO" id="GO:0016829">
    <property type="term" value="F:lyase activity"/>
    <property type="evidence" value="ECO:0007669"/>
    <property type="project" value="UniProtKB-KW"/>
</dbReference>
<dbReference type="GO" id="GO:0017000">
    <property type="term" value="P:antibiotic biosynthetic process"/>
    <property type="evidence" value="ECO:0007669"/>
    <property type="project" value="UniProtKB-KW"/>
</dbReference>
<dbReference type="FunFam" id="3.40.225.10:FF:000009">
    <property type="entry name" value="Class II aldolase/adducin N-terminal"/>
    <property type="match status" value="1"/>
</dbReference>
<dbReference type="Gene3D" id="3.40.225.10">
    <property type="entry name" value="Class II aldolase/adducin N-terminal domain"/>
    <property type="match status" value="1"/>
</dbReference>
<dbReference type="InterPro" id="IPR051017">
    <property type="entry name" value="Aldolase-II_Adducin_sf"/>
</dbReference>
<dbReference type="InterPro" id="IPR001303">
    <property type="entry name" value="Aldolase_II/adducin_N"/>
</dbReference>
<dbReference type="InterPro" id="IPR036409">
    <property type="entry name" value="Aldolase_II/adducin_N_sf"/>
</dbReference>
<dbReference type="NCBIfam" id="NF004855">
    <property type="entry name" value="PRK06208.1"/>
    <property type="match status" value="1"/>
</dbReference>
<dbReference type="PANTHER" id="PTHR10672">
    <property type="entry name" value="ADDUCIN"/>
    <property type="match status" value="1"/>
</dbReference>
<dbReference type="PANTHER" id="PTHR10672:SF3">
    <property type="entry name" value="PROTEIN HU-LI TAI SHAO"/>
    <property type="match status" value="1"/>
</dbReference>
<dbReference type="Pfam" id="PF00596">
    <property type="entry name" value="Aldolase_II"/>
    <property type="match status" value="1"/>
</dbReference>
<dbReference type="SMART" id="SM01007">
    <property type="entry name" value="Aldolase_II"/>
    <property type="match status" value="1"/>
</dbReference>
<dbReference type="SUPFAM" id="SSF53639">
    <property type="entry name" value="AraD/HMP-PK domain-like"/>
    <property type="match status" value="1"/>
</dbReference>
<reference key="1">
    <citation type="journal article" date="2000" name="Antimicrob. Agents Chemother.">
        <title>Identification of the novobiocin biosynthetic gene cluster of Streptomyces spheroides NCIB 11891.</title>
        <authorList>
            <person name="Steffensky M."/>
            <person name="Muhlenweg A."/>
            <person name="Wang Z.X."/>
            <person name="Li S.M."/>
            <person name="Heide L."/>
        </authorList>
    </citation>
    <scope>NUCLEOTIDE SEQUENCE [GENOMIC DNA]</scope>
    <source>
        <strain>ATCC 23965 / DSM 40292 / JCM 4252 / NBRC 12917 / NCIMB 11891 / NRRL 2449</strain>
    </source>
</reference>
<reference key="2">
    <citation type="journal article" date="2006" name="Acta Crystallogr. D">
        <title>Molecular replacement in the 'twilight zone': structure determination of the non-haem iron oxygenase NovR from Streptomyces spheroides through repeated density modification of a poor molecular-replacement solution.</title>
        <authorList>
            <person name="Keller S."/>
            <person name="Pojer F."/>
            <person name="Heide L."/>
            <person name="Lawson D.M."/>
        </authorList>
    </citation>
    <scope>CRYSTALLIZATION</scope>
    <scope>POSSIBLE FUNCTION</scope>
</reference>
<comment type="function">
    <text>May mediate the 2 consecutive oxidative decarboxylation steps in the biosynthesis of the prenylated hydroxybenzoic acid moiety of novobiocin, an aminocoumarin family antibiotic that targets bacterial DNA gyrases.</text>
</comment>
<comment type="pathway">
    <text>Antibiotic biosynthesis; novobiocin biosynthesis.</text>
</comment>
<comment type="similarity">
    <text evidence="1">Belongs to the aldolase class II family.</text>
</comment>
<feature type="chain" id="PRO_0000423993" description="Decarboxylase NovR">
    <location>
        <begin position="1"/>
        <end position="270"/>
    </location>
</feature>
<organism>
    <name type="scientific">Streptomyces niveus</name>
    <name type="common">Streptomyces spheroides</name>
    <dbReference type="NCBI Taxonomy" id="193462"/>
    <lineage>
        <taxon>Bacteria</taxon>
        <taxon>Bacillati</taxon>
        <taxon>Actinomycetota</taxon>
        <taxon>Actinomycetes</taxon>
        <taxon>Kitasatosporales</taxon>
        <taxon>Streptomycetaceae</taxon>
        <taxon>Streptomyces</taxon>
    </lineage>
</organism>
<keyword id="KW-0045">Antibiotic biosynthesis</keyword>
<keyword id="KW-0456">Lyase</keyword>
<sequence>MSEALANMPGDDYFRQPPVFDTYAEHRAYLKFRHAVALRHFARLGFDQDGLAGLITVADPEHADTYWANPLAHPFSTITPADLIRVDGDSAETVEGQRRVNIAAFNIHAEIHRARPDVQAVIHLHTVYGRAFSAFARKLPPLTQDACPFFEDHEVFDDFTGLVLAKDDGRRIAKQLRGHKAILLKNHGLVTVGETLDAAAWWFTLLDTCCHVQLLADAAGKPEEIPAEVARLTGRQLGSHLLGWNSYQPLHEAALARDPDLATMEPALPS</sequence>
<evidence type="ECO:0000305" key="1"/>
<name>NOVR_STRNV</name>
<accession>Q9L9F0</accession>
<protein>
    <recommendedName>
        <fullName>Decarboxylase NovR</fullName>
        <ecNumber>4.1.-.-</ecNumber>
    </recommendedName>
    <alternativeName>
        <fullName>Novobiocin biosynthesis protein R</fullName>
    </alternativeName>
</protein>
<proteinExistence type="evidence at protein level"/>
<gene>
    <name type="primary">novR</name>
</gene>